<protein>
    <recommendedName>
        <fullName evidence="1">Adenylate kinase</fullName>
        <shortName evidence="1">AK</shortName>
        <ecNumber evidence="1">2.7.4.3</ecNumber>
    </recommendedName>
    <alternativeName>
        <fullName evidence="1">ATP-AMP transphosphorylase</fullName>
    </alternativeName>
    <alternativeName>
        <fullName evidence="1">ATP:AMP phosphotransferase</fullName>
    </alternativeName>
    <alternativeName>
        <fullName evidence="1">Adenylate monophosphate kinase</fullName>
    </alternativeName>
</protein>
<keyword id="KW-0067">ATP-binding</keyword>
<keyword id="KW-0963">Cytoplasm</keyword>
<keyword id="KW-0418">Kinase</keyword>
<keyword id="KW-0545">Nucleotide biosynthesis</keyword>
<keyword id="KW-0547">Nucleotide-binding</keyword>
<keyword id="KW-1185">Reference proteome</keyword>
<keyword id="KW-0808">Transferase</keyword>
<name>KAD_NITV2</name>
<accession>Q72AR0</accession>
<gene>
    <name evidence="1" type="primary">adk</name>
    <name type="ordered locus">DVU_1932</name>
</gene>
<dbReference type="EC" id="2.7.4.3" evidence="1"/>
<dbReference type="EMBL" id="AE017285">
    <property type="protein sequence ID" value="AAS96408.1"/>
    <property type="molecule type" value="Genomic_DNA"/>
</dbReference>
<dbReference type="RefSeq" id="WP_010939218.1">
    <property type="nucleotide sequence ID" value="NC_002937.3"/>
</dbReference>
<dbReference type="RefSeq" id="YP_011149.1">
    <property type="nucleotide sequence ID" value="NC_002937.3"/>
</dbReference>
<dbReference type="SMR" id="Q72AR0"/>
<dbReference type="IntAct" id="Q72AR0">
    <property type="interactions" value="4"/>
</dbReference>
<dbReference type="STRING" id="882.DVU_1932"/>
<dbReference type="PaxDb" id="882-DVU_1932"/>
<dbReference type="EnsemblBacteria" id="AAS96408">
    <property type="protein sequence ID" value="AAS96408"/>
    <property type="gene ID" value="DVU_1932"/>
</dbReference>
<dbReference type="KEGG" id="dvu:DVU_1932"/>
<dbReference type="PATRIC" id="fig|882.5.peg.1775"/>
<dbReference type="eggNOG" id="COG0563">
    <property type="taxonomic scope" value="Bacteria"/>
</dbReference>
<dbReference type="HOGENOM" id="CLU_032354_1_2_7"/>
<dbReference type="OrthoDB" id="9805030at2"/>
<dbReference type="PhylomeDB" id="Q72AR0"/>
<dbReference type="UniPathway" id="UPA00588">
    <property type="reaction ID" value="UER00649"/>
</dbReference>
<dbReference type="Proteomes" id="UP000002194">
    <property type="component" value="Chromosome"/>
</dbReference>
<dbReference type="GO" id="GO:0005737">
    <property type="term" value="C:cytoplasm"/>
    <property type="evidence" value="ECO:0007669"/>
    <property type="project" value="UniProtKB-SubCell"/>
</dbReference>
<dbReference type="GO" id="GO:0004017">
    <property type="term" value="F:adenylate kinase activity"/>
    <property type="evidence" value="ECO:0007669"/>
    <property type="project" value="UniProtKB-UniRule"/>
</dbReference>
<dbReference type="GO" id="GO:0005524">
    <property type="term" value="F:ATP binding"/>
    <property type="evidence" value="ECO:0007669"/>
    <property type="project" value="UniProtKB-UniRule"/>
</dbReference>
<dbReference type="GO" id="GO:0044209">
    <property type="term" value="P:AMP salvage"/>
    <property type="evidence" value="ECO:0007669"/>
    <property type="project" value="UniProtKB-UniRule"/>
</dbReference>
<dbReference type="CDD" id="cd01428">
    <property type="entry name" value="ADK"/>
    <property type="match status" value="1"/>
</dbReference>
<dbReference type="Gene3D" id="3.40.50.300">
    <property type="entry name" value="P-loop containing nucleotide triphosphate hydrolases"/>
    <property type="match status" value="1"/>
</dbReference>
<dbReference type="HAMAP" id="MF_00235">
    <property type="entry name" value="Adenylate_kinase_Adk"/>
    <property type="match status" value="1"/>
</dbReference>
<dbReference type="InterPro" id="IPR000850">
    <property type="entry name" value="Adenylat/UMP-CMP_kin"/>
</dbReference>
<dbReference type="InterPro" id="IPR033690">
    <property type="entry name" value="Adenylat_kinase_CS"/>
</dbReference>
<dbReference type="InterPro" id="IPR027417">
    <property type="entry name" value="P-loop_NTPase"/>
</dbReference>
<dbReference type="NCBIfam" id="NF011102">
    <property type="entry name" value="PRK14529.1"/>
    <property type="match status" value="1"/>
</dbReference>
<dbReference type="PANTHER" id="PTHR23359">
    <property type="entry name" value="NUCLEOTIDE KINASE"/>
    <property type="match status" value="1"/>
</dbReference>
<dbReference type="Pfam" id="PF00406">
    <property type="entry name" value="ADK"/>
    <property type="match status" value="1"/>
</dbReference>
<dbReference type="PRINTS" id="PR00094">
    <property type="entry name" value="ADENYLTKNASE"/>
</dbReference>
<dbReference type="SUPFAM" id="SSF52540">
    <property type="entry name" value="P-loop containing nucleoside triphosphate hydrolases"/>
    <property type="match status" value="1"/>
</dbReference>
<dbReference type="PROSITE" id="PS00113">
    <property type="entry name" value="ADENYLATE_KINASE"/>
    <property type="match status" value="1"/>
</dbReference>
<comment type="function">
    <text evidence="1">Catalyzes the reversible transfer of the terminal phosphate group between ATP and AMP. Plays an important role in cellular energy homeostasis and in adenine nucleotide metabolism.</text>
</comment>
<comment type="catalytic activity">
    <reaction evidence="1">
        <text>AMP + ATP = 2 ADP</text>
        <dbReference type="Rhea" id="RHEA:12973"/>
        <dbReference type="ChEBI" id="CHEBI:30616"/>
        <dbReference type="ChEBI" id="CHEBI:456215"/>
        <dbReference type="ChEBI" id="CHEBI:456216"/>
        <dbReference type="EC" id="2.7.4.3"/>
    </reaction>
</comment>
<comment type="pathway">
    <text evidence="1">Purine metabolism; AMP biosynthesis via salvage pathway; AMP from ADP: step 1/1.</text>
</comment>
<comment type="subunit">
    <text evidence="1">Monomer.</text>
</comment>
<comment type="subcellular location">
    <subcellularLocation>
        <location evidence="1">Cytoplasm</location>
    </subcellularLocation>
</comment>
<comment type="domain">
    <text evidence="1">Consists of three domains, a large central CORE domain and two small peripheral domains, NMPbind and LID, which undergo movements during catalysis. The LID domain closes over the site of phosphoryl transfer upon ATP binding. Assembling and dissambling the active center during each catalytic cycle provides an effective means to prevent ATP hydrolysis.</text>
</comment>
<comment type="similarity">
    <text evidence="1">Belongs to the adenylate kinase family.</text>
</comment>
<reference key="1">
    <citation type="journal article" date="2004" name="Nat. Biotechnol.">
        <title>The genome sequence of the anaerobic, sulfate-reducing bacterium Desulfovibrio vulgaris Hildenborough.</title>
        <authorList>
            <person name="Heidelberg J.F."/>
            <person name="Seshadri R."/>
            <person name="Haveman S.A."/>
            <person name="Hemme C.L."/>
            <person name="Paulsen I.T."/>
            <person name="Kolonay J.F."/>
            <person name="Eisen J.A."/>
            <person name="Ward N.L."/>
            <person name="Methe B.A."/>
            <person name="Brinkac L.M."/>
            <person name="Daugherty S.C."/>
            <person name="DeBoy R.T."/>
            <person name="Dodson R.J."/>
            <person name="Durkin A.S."/>
            <person name="Madupu R."/>
            <person name="Nelson W.C."/>
            <person name="Sullivan S.A."/>
            <person name="Fouts D.E."/>
            <person name="Haft D.H."/>
            <person name="Selengut J."/>
            <person name="Peterson J.D."/>
            <person name="Davidsen T.M."/>
            <person name="Zafar N."/>
            <person name="Zhou L."/>
            <person name="Radune D."/>
            <person name="Dimitrov G."/>
            <person name="Hance M."/>
            <person name="Tran K."/>
            <person name="Khouri H.M."/>
            <person name="Gill J."/>
            <person name="Utterback T.R."/>
            <person name="Feldblyum T.V."/>
            <person name="Wall J.D."/>
            <person name="Voordouw G."/>
            <person name="Fraser C.M."/>
        </authorList>
    </citation>
    <scope>NUCLEOTIDE SEQUENCE [LARGE SCALE GENOMIC DNA]</scope>
    <source>
        <strain>ATCC 29579 / DSM 644 / CCUG 34227 / NCIMB 8303 / VKM B-1760 / Hildenborough</strain>
    </source>
</reference>
<feature type="chain" id="PRO_0000158766" description="Adenylate kinase">
    <location>
        <begin position="1"/>
        <end position="223"/>
    </location>
</feature>
<feature type="region of interest" description="NMP" evidence="1">
    <location>
        <begin position="30"/>
        <end position="59"/>
    </location>
</feature>
<feature type="region of interest" description="LID" evidence="1">
    <location>
        <begin position="125"/>
        <end position="164"/>
    </location>
</feature>
<feature type="binding site" evidence="1">
    <location>
        <begin position="10"/>
        <end position="15"/>
    </location>
    <ligand>
        <name>ATP</name>
        <dbReference type="ChEBI" id="CHEBI:30616"/>
    </ligand>
</feature>
<feature type="binding site" evidence="1">
    <location>
        <position position="31"/>
    </location>
    <ligand>
        <name>AMP</name>
        <dbReference type="ChEBI" id="CHEBI:456215"/>
    </ligand>
</feature>
<feature type="binding site" evidence="1">
    <location>
        <position position="36"/>
    </location>
    <ligand>
        <name>AMP</name>
        <dbReference type="ChEBI" id="CHEBI:456215"/>
    </ligand>
</feature>
<feature type="binding site" evidence="1">
    <location>
        <begin position="57"/>
        <end position="59"/>
    </location>
    <ligand>
        <name>AMP</name>
        <dbReference type="ChEBI" id="CHEBI:456215"/>
    </ligand>
</feature>
<feature type="binding site" evidence="1">
    <location>
        <begin position="84"/>
        <end position="87"/>
    </location>
    <ligand>
        <name>AMP</name>
        <dbReference type="ChEBI" id="CHEBI:456215"/>
    </ligand>
</feature>
<feature type="binding site" evidence="1">
    <location>
        <position position="91"/>
    </location>
    <ligand>
        <name>AMP</name>
        <dbReference type="ChEBI" id="CHEBI:456215"/>
    </ligand>
</feature>
<feature type="binding site" evidence="1">
    <location>
        <position position="126"/>
    </location>
    <ligand>
        <name>ATP</name>
        <dbReference type="ChEBI" id="CHEBI:30616"/>
    </ligand>
</feature>
<feature type="binding site" evidence="1">
    <location>
        <position position="161"/>
    </location>
    <ligand>
        <name>AMP</name>
        <dbReference type="ChEBI" id="CHEBI:456215"/>
    </ligand>
</feature>
<feature type="binding site" evidence="1">
    <location>
        <position position="173"/>
    </location>
    <ligand>
        <name>AMP</name>
        <dbReference type="ChEBI" id="CHEBI:456215"/>
    </ligand>
</feature>
<feature type="binding site" evidence="1">
    <location>
        <position position="209"/>
    </location>
    <ligand>
        <name>ATP</name>
        <dbReference type="ChEBI" id="CHEBI:30616"/>
    </ligand>
</feature>
<organism>
    <name type="scientific">Nitratidesulfovibrio vulgaris (strain ATCC 29579 / DSM 644 / CCUG 34227 / NCIMB 8303 / VKM B-1760 / Hildenborough)</name>
    <name type="common">Desulfovibrio vulgaris</name>
    <dbReference type="NCBI Taxonomy" id="882"/>
    <lineage>
        <taxon>Bacteria</taxon>
        <taxon>Pseudomonadati</taxon>
        <taxon>Thermodesulfobacteriota</taxon>
        <taxon>Desulfovibrionia</taxon>
        <taxon>Desulfovibrionales</taxon>
        <taxon>Desulfovibrionaceae</taxon>
        <taxon>Nitratidesulfovibrio</taxon>
    </lineage>
</organism>
<evidence type="ECO:0000255" key="1">
    <source>
        <dbReference type="HAMAP-Rule" id="MF_00235"/>
    </source>
</evidence>
<sequence>MNILIFGPNGSGKGTQGALVKKKYDLAHIESGAIFREHIGGGTELGKQAKAFIERGDLVPDDITIPMVLETLKSKGANGWLLDGFPRNMVQAQKLWDALQAEGMKLDYVIEILLPREVAKNRIMGRRLCKNDNNHPNNIFIDAIKPNGDVCRVCGGELSARSDDQDEGAIGKRHDIYYNTVDGTLAAAYFYKDLAAKGMTKYIELDGEGAIDAIKDKLLAQLS</sequence>
<proteinExistence type="inferred from homology"/>